<dbReference type="EMBL" id="CM000587">
    <property type="protein sequence ID" value="EWG48577.1"/>
    <property type="status" value="ALT_SEQ"/>
    <property type="molecule type" value="Genomic_DNA"/>
</dbReference>
<dbReference type="RefSeq" id="XP_018754768.1">
    <property type="nucleotide sequence ID" value="XM_018905535.1"/>
</dbReference>
<dbReference type="SMR" id="P9WEP5"/>
<dbReference type="GeneID" id="30073161"/>
<dbReference type="KEGG" id="fvr:FVEG_16285"/>
<dbReference type="OMA" id="IVAAPWM"/>
<dbReference type="OrthoDB" id="48570at110618"/>
<dbReference type="Proteomes" id="UP000009096">
    <property type="component" value="Chromosome 10"/>
</dbReference>
<dbReference type="GO" id="GO:0005886">
    <property type="term" value="C:plasma membrane"/>
    <property type="evidence" value="ECO:0007669"/>
    <property type="project" value="TreeGrafter"/>
</dbReference>
<dbReference type="GO" id="GO:0015203">
    <property type="term" value="F:polyamine transmembrane transporter activity"/>
    <property type="evidence" value="ECO:0007669"/>
    <property type="project" value="TreeGrafter"/>
</dbReference>
<dbReference type="GO" id="GO:0010509">
    <property type="term" value="P:intracellular polyamine homeostasis"/>
    <property type="evidence" value="ECO:0007669"/>
    <property type="project" value="TreeGrafter"/>
</dbReference>
<dbReference type="Gene3D" id="1.20.1250.20">
    <property type="entry name" value="MFS general substrate transporter like domains"/>
    <property type="match status" value="1"/>
</dbReference>
<dbReference type="InterPro" id="IPR036259">
    <property type="entry name" value="MFS_trans_sf"/>
</dbReference>
<dbReference type="PANTHER" id="PTHR23502">
    <property type="entry name" value="MAJOR FACILITATOR SUPERFAMILY"/>
    <property type="match status" value="1"/>
</dbReference>
<dbReference type="PANTHER" id="PTHR23502:SF5">
    <property type="entry name" value="QUINIDINE RESISTANCE PROTEIN 3"/>
    <property type="match status" value="1"/>
</dbReference>
<dbReference type="SUPFAM" id="SSF103473">
    <property type="entry name" value="MFS general substrate transporter"/>
    <property type="match status" value="1"/>
</dbReference>
<keyword id="KW-0325">Glycoprotein</keyword>
<keyword id="KW-0472">Membrane</keyword>
<keyword id="KW-1185">Reference proteome</keyword>
<keyword id="KW-0812">Transmembrane</keyword>
<keyword id="KW-1133">Transmembrane helix</keyword>
<keyword id="KW-0813">Transport</keyword>
<organism>
    <name type="scientific">Gibberella moniliformis (strain M3125 / FGSC 7600)</name>
    <name type="common">Maize ear and stalk rot fungus</name>
    <name type="synonym">Fusarium verticillioides</name>
    <dbReference type="NCBI Taxonomy" id="334819"/>
    <lineage>
        <taxon>Eukaryota</taxon>
        <taxon>Fungi</taxon>
        <taxon>Dikarya</taxon>
        <taxon>Ascomycota</taxon>
        <taxon>Pezizomycotina</taxon>
        <taxon>Sordariomycetes</taxon>
        <taxon>Hypocreomycetidae</taxon>
        <taxon>Hypocreales</taxon>
        <taxon>Nectriaceae</taxon>
        <taxon>Fusarium</taxon>
        <taxon>Fusarium fujikuroi species complex</taxon>
    </lineage>
</organism>
<proteinExistence type="evidence at transcript level"/>
<name>FDB88_GIBM7</name>
<gene>
    <name type="ORF">FVEG_08288</name>
    <name type="ORF">FVEG_16285</name>
</gene>
<feature type="chain" id="PRO_0000454610" description="MFS-type transporter FVEG_08288">
    <location>
        <begin position="1"/>
        <end position="227"/>
    </location>
</feature>
<feature type="transmembrane region" description="Helical" evidence="1">
    <location>
        <begin position="8"/>
        <end position="28"/>
    </location>
</feature>
<feature type="transmembrane region" description="Helical" evidence="1">
    <location>
        <begin position="43"/>
        <end position="63"/>
    </location>
</feature>
<feature type="transmembrane region" description="Helical" evidence="1">
    <location>
        <begin position="100"/>
        <end position="120"/>
    </location>
</feature>
<feature type="transmembrane region" description="Helical" evidence="1">
    <location>
        <begin position="122"/>
        <end position="142"/>
    </location>
</feature>
<feature type="transmembrane region" description="Helical" evidence="1">
    <location>
        <begin position="164"/>
        <end position="181"/>
    </location>
</feature>
<feature type="transmembrane region" description="Helical" evidence="1">
    <location>
        <begin position="188"/>
        <end position="208"/>
    </location>
</feature>
<feature type="glycosylation site" description="N-linked (GlcNAc...) asparagine" evidence="2">
    <location>
        <position position="40"/>
    </location>
</feature>
<accession>P9WEP5</accession>
<accession>W7MVT4</accession>
<protein>
    <recommendedName>
        <fullName evidence="6">MFS-type transporter FVEG_08288</fullName>
    </recommendedName>
    <alternativeName>
        <fullName evidence="6">Fusarium detoxification of benzoxazolinone cluster 1 protein FVEG_08288</fullName>
        <shortName evidence="6">FDB1 cluster protein FVEG_08288</shortName>
    </alternativeName>
</protein>
<comment type="function">
    <text evidence="3 4 5">MFS-type transporter; part of the Fusarium detoxification of benzoxazolinone cluster 1 (FDB1) involved in the degradation of benzoxazolinones produced by the host plant (PubMed:19302487, PubMed:26808652). Maize, wheat, and rye produce the 2 benzoxazinone phytoanticipins 2,4-dihy-droxy-7-methoxy-1,4-benzoxazin-3-one (DIMBOA) and 2,4-dihydroxy-1,4-benzoxazin-3-one (DIBOA) that, due to their inherent instability once released, spontaneously degrade to the more stable corresponding benzoxazolinones, 6-methoxy-2-benzoxazolinone (MBOA) and 2-benzoxazolinone (BOA), respectively (PubMed:11876429).</text>
</comment>
<comment type="subcellular location">
    <subcellularLocation>
        <location evidence="1">Membrane</location>
        <topology evidence="1">Multi-pass membrane protein</topology>
    </subcellularLocation>
</comment>
<comment type="induction">
    <text evidence="5">Expression is induced in response to 2-benzoxasolinone (BOA) exposure.</text>
</comment>
<comment type="disruption phenotype">
    <text evidence="5">Does not affect BOA degradation.</text>
</comment>
<comment type="miscellaneous">
    <text evidence="8">Fusarium verticillioides possesses 2 unlinked loci, FDB1 and FDB2, necessary for detoxification of antimicrobial compounds produced by maize, including 2-benzoxazolinone (BOA) (Probable). The FDB2 cluster arose as a duplication of the FDB1 cluster with rearrangement and expansion by incorporating additional genes (Probable).</text>
</comment>
<comment type="similarity">
    <text evidence="7">Belongs to the major facilitator superfamily.</text>
</comment>
<comment type="sequence caution" evidence="8">
    <conflict type="erroneous gene model prediction">
        <sequence resource="EMBL-CDS" id="EWG48577"/>
    </conflict>
    <text>The predicted gene FVEG_16285 has been split into 2 genes: FVEG_08288 and AMD1/FVEG_08289.</text>
</comment>
<evidence type="ECO:0000255" key="1"/>
<evidence type="ECO:0000255" key="2">
    <source>
        <dbReference type="PROSITE-ProRule" id="PRU00498"/>
    </source>
</evidence>
<evidence type="ECO:0000269" key="3">
    <source>
    </source>
</evidence>
<evidence type="ECO:0000269" key="4">
    <source>
    </source>
</evidence>
<evidence type="ECO:0000269" key="5">
    <source>
    </source>
</evidence>
<evidence type="ECO:0000303" key="6">
    <source>
    </source>
</evidence>
<evidence type="ECO:0000305" key="7"/>
<evidence type="ECO:0000305" key="8">
    <source>
    </source>
</evidence>
<sequence>MLLRLPPVFLTVLIAIASCSVYILNIAIESGFADSPYNFNQTTVGLAYMSTGIGYILSSMAGGRWMDSIMAREARKVVRSDSHGKLISLPEDHMKENAWVANTLYPLSSLWFGWTMYYGVQFMVPISALFVFGFTLMLHFTLGTTMLTEFVRKRSSAGVTVNNFVRNILSCVGTIVAAPWMKGVGLRYMMTKLCIICLLLGSLGIWLITRNAQRWRGTLDKALKEMD</sequence>
<reference key="1">
    <citation type="journal article" date="2010" name="Nature">
        <title>Comparative genomics reveals mobile pathogenicity chromosomes in Fusarium.</title>
        <authorList>
            <person name="Ma L.-J."/>
            <person name="van der Does H.C."/>
            <person name="Borkovich K.A."/>
            <person name="Coleman J.J."/>
            <person name="Daboussi M.-J."/>
            <person name="Di Pietro A."/>
            <person name="Dufresne M."/>
            <person name="Freitag M."/>
            <person name="Grabherr M."/>
            <person name="Henrissat B."/>
            <person name="Houterman P.M."/>
            <person name="Kang S."/>
            <person name="Shim W.-B."/>
            <person name="Woloshuk C."/>
            <person name="Xie X."/>
            <person name="Xu J.-R."/>
            <person name="Antoniw J."/>
            <person name="Baker S.E."/>
            <person name="Bluhm B.H."/>
            <person name="Breakspear A."/>
            <person name="Brown D.W."/>
            <person name="Butchko R.A.E."/>
            <person name="Chapman S."/>
            <person name="Coulson R."/>
            <person name="Coutinho P.M."/>
            <person name="Danchin E.G.J."/>
            <person name="Diener A."/>
            <person name="Gale L.R."/>
            <person name="Gardiner D.M."/>
            <person name="Goff S."/>
            <person name="Hammond-Kosack K.E."/>
            <person name="Hilburn K."/>
            <person name="Hua-Van A."/>
            <person name="Jonkers W."/>
            <person name="Kazan K."/>
            <person name="Kodira C.D."/>
            <person name="Koehrsen M."/>
            <person name="Kumar L."/>
            <person name="Lee Y.-H."/>
            <person name="Li L."/>
            <person name="Manners J.M."/>
            <person name="Miranda-Saavedra D."/>
            <person name="Mukherjee M."/>
            <person name="Park G."/>
            <person name="Park J."/>
            <person name="Park S.-Y."/>
            <person name="Proctor R.H."/>
            <person name="Regev A."/>
            <person name="Ruiz-Roldan M.C."/>
            <person name="Sain D."/>
            <person name="Sakthikumar S."/>
            <person name="Sykes S."/>
            <person name="Schwartz D.C."/>
            <person name="Turgeon B.G."/>
            <person name="Wapinski I."/>
            <person name="Yoder O."/>
            <person name="Young S."/>
            <person name="Zeng Q."/>
            <person name="Zhou S."/>
            <person name="Galagan J."/>
            <person name="Cuomo C.A."/>
            <person name="Kistler H.C."/>
            <person name="Rep M."/>
        </authorList>
    </citation>
    <scope>NUCLEOTIDE SEQUENCE [LARGE SCALE GENOMIC DNA]</scope>
    <source>
        <strain>M3125 / FGSC 7600</strain>
    </source>
</reference>
<reference key="2">
    <citation type="journal article" date="2002" name="Mol. Plant Microbe Interact.">
        <title>Fdb1 and Fdb2, Fusarium verticillioides loci necessary for detoxification of preformed antimicrobials from corn.</title>
        <authorList>
            <person name="Glenn A.E."/>
            <person name="Gold S.E."/>
            <person name="Bacon C.W."/>
        </authorList>
    </citation>
    <scope>FUNCTION</scope>
</reference>
<reference key="3">
    <citation type="journal article" date="2009" name="J. Appl. Microbiol.">
        <title>FDB2 encodes a member of the arylamine N-acetyltransferase family and is necessary for biotransformation of benzoxazolinones by Fusarium verticillioides.</title>
        <authorList>
            <person name="Glenn A.E."/>
            <person name="Bacon C.W."/>
        </authorList>
    </citation>
    <scope>FUNCTION</scope>
</reference>
<reference key="4">
    <citation type="journal article" date="2016" name="PLoS ONE">
        <title>Two horizontally transferred xenobiotic resistance gene clusters associated with detoxification of benzoxazolinones by Fusarium species.</title>
        <authorList>
            <person name="Glenn A.E."/>
            <person name="Davis C.B."/>
            <person name="Gao M."/>
            <person name="Gold S.E."/>
            <person name="Mitchell T.R."/>
            <person name="Proctor R.H."/>
            <person name="Stewart J.E."/>
            <person name="Snook M.E."/>
        </authorList>
    </citation>
    <scope>FUNCTION</scope>
    <scope>INDUCTION</scope>
    <scope>DISRUPTION PHENOTYPE</scope>
</reference>